<gene>
    <name evidence="1" type="primary">pqqD</name>
    <name type="ordered locus">Pfl01_5160</name>
</gene>
<reference key="1">
    <citation type="journal article" date="2009" name="Genome Biol.">
        <title>Genomic and genetic analyses of diversity and plant interactions of Pseudomonas fluorescens.</title>
        <authorList>
            <person name="Silby M.W."/>
            <person name="Cerdeno-Tarraga A.M."/>
            <person name="Vernikos G.S."/>
            <person name="Giddens S.R."/>
            <person name="Jackson R.W."/>
            <person name="Preston G.M."/>
            <person name="Zhang X.-X."/>
            <person name="Moon C.D."/>
            <person name="Gehrig S.M."/>
            <person name="Godfrey S.A.C."/>
            <person name="Knight C.G."/>
            <person name="Malone J.G."/>
            <person name="Robinson Z."/>
            <person name="Spiers A.J."/>
            <person name="Harris S."/>
            <person name="Challis G.L."/>
            <person name="Yaxley A.M."/>
            <person name="Harris D."/>
            <person name="Seeger K."/>
            <person name="Murphy L."/>
            <person name="Rutter S."/>
            <person name="Squares R."/>
            <person name="Quail M.A."/>
            <person name="Saunders E."/>
            <person name="Mavromatis K."/>
            <person name="Brettin T.S."/>
            <person name="Bentley S.D."/>
            <person name="Hothersall J."/>
            <person name="Stephens E."/>
            <person name="Thomas C.M."/>
            <person name="Parkhill J."/>
            <person name="Levy S.B."/>
            <person name="Rainey P.B."/>
            <person name="Thomson N.R."/>
        </authorList>
    </citation>
    <scope>NUCLEOTIDE SEQUENCE [LARGE SCALE GENOMIC DNA]</scope>
    <source>
        <strain>Pf0-1</strain>
    </source>
</reference>
<accession>Q3K5Q7</accession>
<name>PQQD_PSEPF</name>
<keyword id="KW-0884">PQQ biosynthesis</keyword>
<feature type="chain" id="PRO_1000061688" description="PqqA binding protein">
    <location>
        <begin position="1"/>
        <end position="91"/>
    </location>
</feature>
<sequence>MSFDRSKTPTWRPGYRFQYEPAQKGHVLLYPEGMIKLNESAALIGGLIDGERDVAAIIAELDKQFPGVPELGDDIEQFMEVARAQHWITLD</sequence>
<comment type="function">
    <text evidence="1">Functions as a PqqA binding protein and presents PqqA to PqqE, in the pyrroloquinoline quinone (PQQ) biosynthetic pathway.</text>
</comment>
<comment type="pathway">
    <text evidence="1">Cofactor biosynthesis; pyrroloquinoline quinone biosynthesis.</text>
</comment>
<comment type="subunit">
    <text evidence="1">Monomer. Interacts with PqqE.</text>
</comment>
<comment type="similarity">
    <text evidence="1">Belongs to the PqqD family.</text>
</comment>
<organism>
    <name type="scientific">Pseudomonas fluorescens (strain Pf0-1)</name>
    <dbReference type="NCBI Taxonomy" id="205922"/>
    <lineage>
        <taxon>Bacteria</taxon>
        <taxon>Pseudomonadati</taxon>
        <taxon>Pseudomonadota</taxon>
        <taxon>Gammaproteobacteria</taxon>
        <taxon>Pseudomonadales</taxon>
        <taxon>Pseudomonadaceae</taxon>
        <taxon>Pseudomonas</taxon>
    </lineage>
</organism>
<dbReference type="EMBL" id="CP000094">
    <property type="protein sequence ID" value="ABA76897.1"/>
    <property type="molecule type" value="Genomic_DNA"/>
</dbReference>
<dbReference type="RefSeq" id="WP_011336229.1">
    <property type="nucleotide sequence ID" value="NC_007492.2"/>
</dbReference>
<dbReference type="SMR" id="Q3K5Q7"/>
<dbReference type="KEGG" id="pfo:Pfl01_5160"/>
<dbReference type="eggNOG" id="ENOG5032Z81">
    <property type="taxonomic scope" value="Bacteria"/>
</dbReference>
<dbReference type="HOGENOM" id="CLU_163864_2_1_6"/>
<dbReference type="UniPathway" id="UPA00539"/>
<dbReference type="Proteomes" id="UP000002704">
    <property type="component" value="Chromosome"/>
</dbReference>
<dbReference type="GO" id="GO:0048038">
    <property type="term" value="F:quinone binding"/>
    <property type="evidence" value="ECO:0007669"/>
    <property type="project" value="InterPro"/>
</dbReference>
<dbReference type="GO" id="GO:0018189">
    <property type="term" value="P:pyrroloquinoline quinone biosynthetic process"/>
    <property type="evidence" value="ECO:0007669"/>
    <property type="project" value="UniProtKB-UniRule"/>
</dbReference>
<dbReference type="Gene3D" id="1.10.10.1150">
    <property type="entry name" value="Coenzyme PQQ synthesis protein D (PqqD)"/>
    <property type="match status" value="1"/>
</dbReference>
<dbReference type="HAMAP" id="MF_00655">
    <property type="entry name" value="PQQ_syn_PqqD"/>
    <property type="match status" value="1"/>
</dbReference>
<dbReference type="InterPro" id="IPR008792">
    <property type="entry name" value="PQQD"/>
</dbReference>
<dbReference type="InterPro" id="IPR022479">
    <property type="entry name" value="PqqD_bac"/>
</dbReference>
<dbReference type="InterPro" id="IPR041881">
    <property type="entry name" value="PqqD_sf"/>
</dbReference>
<dbReference type="NCBIfam" id="TIGR03859">
    <property type="entry name" value="PQQ_PqqD"/>
    <property type="match status" value="1"/>
</dbReference>
<dbReference type="NCBIfam" id="NF002535">
    <property type="entry name" value="PRK02079.1"/>
    <property type="match status" value="1"/>
</dbReference>
<dbReference type="Pfam" id="PF05402">
    <property type="entry name" value="PqqD"/>
    <property type="match status" value="1"/>
</dbReference>
<protein>
    <recommendedName>
        <fullName evidence="1">PqqA binding protein</fullName>
    </recommendedName>
    <alternativeName>
        <fullName evidence="1">Coenzyme PQQ synthesis protein D</fullName>
    </alternativeName>
    <alternativeName>
        <fullName evidence="1">Pyrroloquinoline quinone biosynthesis protein D</fullName>
    </alternativeName>
</protein>
<evidence type="ECO:0000255" key="1">
    <source>
        <dbReference type="HAMAP-Rule" id="MF_00655"/>
    </source>
</evidence>
<proteinExistence type="inferred from homology"/>